<name>ENGB_HAEDU</name>
<comment type="function">
    <text evidence="1">Necessary for normal cell division and for the maintenance of normal septation.</text>
</comment>
<comment type="cofactor">
    <cofactor evidence="1">
        <name>Mg(2+)</name>
        <dbReference type="ChEBI" id="CHEBI:18420"/>
    </cofactor>
</comment>
<comment type="similarity">
    <text evidence="1">Belongs to the TRAFAC class TrmE-Era-EngA-EngB-Septin-like GTPase superfamily. EngB GTPase family.</text>
</comment>
<protein>
    <recommendedName>
        <fullName evidence="1">Probable GTP-binding protein EngB</fullName>
    </recommendedName>
</protein>
<feature type="chain" id="PRO_0000157751" description="Probable GTP-binding protein EngB">
    <location>
        <begin position="1"/>
        <end position="210"/>
    </location>
</feature>
<feature type="domain" description="EngB-type G" evidence="1">
    <location>
        <begin position="29"/>
        <end position="203"/>
    </location>
</feature>
<feature type="binding site" evidence="1">
    <location>
        <begin position="37"/>
        <end position="44"/>
    </location>
    <ligand>
        <name>GTP</name>
        <dbReference type="ChEBI" id="CHEBI:37565"/>
    </ligand>
</feature>
<feature type="binding site" evidence="1">
    <location>
        <position position="44"/>
    </location>
    <ligand>
        <name>Mg(2+)</name>
        <dbReference type="ChEBI" id="CHEBI:18420"/>
    </ligand>
</feature>
<feature type="binding site" evidence="1">
    <location>
        <begin position="64"/>
        <end position="68"/>
    </location>
    <ligand>
        <name>GTP</name>
        <dbReference type="ChEBI" id="CHEBI:37565"/>
    </ligand>
</feature>
<feature type="binding site" evidence="1">
    <location>
        <position position="66"/>
    </location>
    <ligand>
        <name>Mg(2+)</name>
        <dbReference type="ChEBI" id="CHEBI:18420"/>
    </ligand>
</feature>
<feature type="binding site" evidence="1">
    <location>
        <begin position="82"/>
        <end position="85"/>
    </location>
    <ligand>
        <name>GTP</name>
        <dbReference type="ChEBI" id="CHEBI:37565"/>
    </ligand>
</feature>
<feature type="binding site" evidence="1">
    <location>
        <begin position="149"/>
        <end position="152"/>
    </location>
    <ligand>
        <name>GTP</name>
        <dbReference type="ChEBI" id="CHEBI:37565"/>
    </ligand>
</feature>
<feature type="binding site" evidence="1">
    <location>
        <begin position="181"/>
        <end position="184"/>
    </location>
    <ligand>
        <name>GTP</name>
        <dbReference type="ChEBI" id="CHEBI:37565"/>
    </ligand>
</feature>
<keyword id="KW-0131">Cell cycle</keyword>
<keyword id="KW-0132">Cell division</keyword>
<keyword id="KW-0342">GTP-binding</keyword>
<keyword id="KW-0460">Magnesium</keyword>
<keyword id="KW-0479">Metal-binding</keyword>
<keyword id="KW-0547">Nucleotide-binding</keyword>
<keyword id="KW-1185">Reference proteome</keyword>
<keyword id="KW-0717">Septation</keyword>
<reference key="1">
    <citation type="submission" date="2003-06" db="EMBL/GenBank/DDBJ databases">
        <title>The complete genome sequence of Haemophilus ducreyi.</title>
        <authorList>
            <person name="Munson R.S. Jr."/>
            <person name="Ray W.C."/>
            <person name="Mahairas G."/>
            <person name="Sabo P."/>
            <person name="Mungur R."/>
            <person name="Johnson L."/>
            <person name="Nguyen D."/>
            <person name="Wang J."/>
            <person name="Forst C."/>
            <person name="Hood L."/>
        </authorList>
    </citation>
    <scope>NUCLEOTIDE SEQUENCE [LARGE SCALE GENOMIC DNA]</scope>
    <source>
        <strain>35000HP / ATCC 700724</strain>
    </source>
</reference>
<proteinExistence type="inferred from homology"/>
<accession>Q7VNY0</accession>
<sequence length="210" mass="23515">MTEPTIKLNYHKTRFLTSAPDIRHLPEDNGIEIAFAGRSNAGKSTALNALTNQKSLARTSKTPGRTQLINLFEVEPQCKLVDLPGYGYAAVPEQMKLQWQKALGEYLQKRDCLAGIVILMDIRHPLKDLDQQMIEWAVSAQLPVLLLLTKADKLSQVARNKTAKMVNEAILPFQGDIQVEIYSALNKIGVDKLSNKLDSWFAPIFQQEGK</sequence>
<organism>
    <name type="scientific">Haemophilus ducreyi (strain 35000HP / ATCC 700724)</name>
    <dbReference type="NCBI Taxonomy" id="233412"/>
    <lineage>
        <taxon>Bacteria</taxon>
        <taxon>Pseudomonadati</taxon>
        <taxon>Pseudomonadota</taxon>
        <taxon>Gammaproteobacteria</taxon>
        <taxon>Pasteurellales</taxon>
        <taxon>Pasteurellaceae</taxon>
        <taxon>Haemophilus</taxon>
    </lineage>
</organism>
<gene>
    <name evidence="1" type="primary">engB</name>
    <name type="ordered locus">HD_0342</name>
</gene>
<dbReference type="EMBL" id="AE017143">
    <property type="protein sequence ID" value="AAP95317.1"/>
    <property type="molecule type" value="Genomic_DNA"/>
</dbReference>
<dbReference type="RefSeq" id="WP_010944370.1">
    <property type="nucleotide sequence ID" value="NC_002940.2"/>
</dbReference>
<dbReference type="SMR" id="Q7VNY0"/>
<dbReference type="STRING" id="233412.HD_0342"/>
<dbReference type="KEGG" id="hdu:HD_0342"/>
<dbReference type="eggNOG" id="COG0218">
    <property type="taxonomic scope" value="Bacteria"/>
</dbReference>
<dbReference type="HOGENOM" id="CLU_033732_1_0_6"/>
<dbReference type="OrthoDB" id="9804921at2"/>
<dbReference type="Proteomes" id="UP000001022">
    <property type="component" value="Chromosome"/>
</dbReference>
<dbReference type="GO" id="GO:0005829">
    <property type="term" value="C:cytosol"/>
    <property type="evidence" value="ECO:0007669"/>
    <property type="project" value="TreeGrafter"/>
</dbReference>
<dbReference type="GO" id="GO:0005525">
    <property type="term" value="F:GTP binding"/>
    <property type="evidence" value="ECO:0007669"/>
    <property type="project" value="UniProtKB-UniRule"/>
</dbReference>
<dbReference type="GO" id="GO:0046872">
    <property type="term" value="F:metal ion binding"/>
    <property type="evidence" value="ECO:0007669"/>
    <property type="project" value="UniProtKB-KW"/>
</dbReference>
<dbReference type="GO" id="GO:0000917">
    <property type="term" value="P:division septum assembly"/>
    <property type="evidence" value="ECO:0007669"/>
    <property type="project" value="UniProtKB-KW"/>
</dbReference>
<dbReference type="CDD" id="cd01876">
    <property type="entry name" value="YihA_EngB"/>
    <property type="match status" value="1"/>
</dbReference>
<dbReference type="FunFam" id="3.40.50.300:FF:000098">
    <property type="entry name" value="Probable GTP-binding protein EngB"/>
    <property type="match status" value="1"/>
</dbReference>
<dbReference type="Gene3D" id="3.40.50.300">
    <property type="entry name" value="P-loop containing nucleotide triphosphate hydrolases"/>
    <property type="match status" value="1"/>
</dbReference>
<dbReference type="HAMAP" id="MF_00321">
    <property type="entry name" value="GTPase_EngB"/>
    <property type="match status" value="1"/>
</dbReference>
<dbReference type="InterPro" id="IPR030393">
    <property type="entry name" value="G_ENGB_dom"/>
</dbReference>
<dbReference type="InterPro" id="IPR006073">
    <property type="entry name" value="GTP-bd"/>
</dbReference>
<dbReference type="InterPro" id="IPR019987">
    <property type="entry name" value="GTP-bd_ribosome_bio_YsxC"/>
</dbReference>
<dbReference type="InterPro" id="IPR027417">
    <property type="entry name" value="P-loop_NTPase"/>
</dbReference>
<dbReference type="NCBIfam" id="TIGR03598">
    <property type="entry name" value="GTPase_YsxC"/>
    <property type="match status" value="1"/>
</dbReference>
<dbReference type="PANTHER" id="PTHR11649:SF13">
    <property type="entry name" value="ENGB-TYPE G DOMAIN-CONTAINING PROTEIN"/>
    <property type="match status" value="1"/>
</dbReference>
<dbReference type="PANTHER" id="PTHR11649">
    <property type="entry name" value="MSS1/TRME-RELATED GTP-BINDING PROTEIN"/>
    <property type="match status" value="1"/>
</dbReference>
<dbReference type="Pfam" id="PF01926">
    <property type="entry name" value="MMR_HSR1"/>
    <property type="match status" value="1"/>
</dbReference>
<dbReference type="SUPFAM" id="SSF52540">
    <property type="entry name" value="P-loop containing nucleoside triphosphate hydrolases"/>
    <property type="match status" value="1"/>
</dbReference>
<dbReference type="PROSITE" id="PS51706">
    <property type="entry name" value="G_ENGB"/>
    <property type="match status" value="1"/>
</dbReference>
<evidence type="ECO:0000255" key="1">
    <source>
        <dbReference type="HAMAP-Rule" id="MF_00321"/>
    </source>
</evidence>